<dbReference type="EMBL" id="CP000378">
    <property type="protein sequence ID" value="ABF77635.1"/>
    <property type="molecule type" value="Genomic_DNA"/>
</dbReference>
<dbReference type="SMR" id="Q1BRX0"/>
<dbReference type="HOGENOM" id="CLU_135723_6_2_4"/>
<dbReference type="GO" id="GO:0005737">
    <property type="term" value="C:cytoplasm"/>
    <property type="evidence" value="ECO:0007669"/>
    <property type="project" value="UniProtKB-ARBA"/>
</dbReference>
<dbReference type="GO" id="GO:1990904">
    <property type="term" value="C:ribonucleoprotein complex"/>
    <property type="evidence" value="ECO:0007669"/>
    <property type="project" value="UniProtKB-KW"/>
</dbReference>
<dbReference type="GO" id="GO:0005840">
    <property type="term" value="C:ribosome"/>
    <property type="evidence" value="ECO:0007669"/>
    <property type="project" value="UniProtKB-KW"/>
</dbReference>
<dbReference type="GO" id="GO:0003735">
    <property type="term" value="F:structural constituent of ribosome"/>
    <property type="evidence" value="ECO:0007669"/>
    <property type="project" value="InterPro"/>
</dbReference>
<dbReference type="GO" id="GO:0006412">
    <property type="term" value="P:translation"/>
    <property type="evidence" value="ECO:0007669"/>
    <property type="project" value="UniProtKB-UniRule"/>
</dbReference>
<dbReference type="HAMAP" id="MF_00251">
    <property type="entry name" value="Ribosomal_bL36"/>
    <property type="match status" value="1"/>
</dbReference>
<dbReference type="InterPro" id="IPR000473">
    <property type="entry name" value="Ribosomal_bL36"/>
</dbReference>
<dbReference type="InterPro" id="IPR035977">
    <property type="entry name" value="Ribosomal_bL36_sp"/>
</dbReference>
<dbReference type="NCBIfam" id="TIGR01022">
    <property type="entry name" value="rpmJ_bact"/>
    <property type="match status" value="1"/>
</dbReference>
<dbReference type="PANTHER" id="PTHR42888">
    <property type="entry name" value="50S RIBOSOMAL PROTEIN L36, CHLOROPLASTIC"/>
    <property type="match status" value="1"/>
</dbReference>
<dbReference type="PANTHER" id="PTHR42888:SF1">
    <property type="entry name" value="LARGE RIBOSOMAL SUBUNIT PROTEIN BL36C"/>
    <property type="match status" value="1"/>
</dbReference>
<dbReference type="Pfam" id="PF00444">
    <property type="entry name" value="Ribosomal_L36"/>
    <property type="match status" value="1"/>
</dbReference>
<dbReference type="SUPFAM" id="SSF57840">
    <property type="entry name" value="Ribosomal protein L36"/>
    <property type="match status" value="1"/>
</dbReference>
<dbReference type="PROSITE" id="PS00828">
    <property type="entry name" value="RIBOSOMAL_L36"/>
    <property type="match status" value="1"/>
</dbReference>
<name>RL36_BURO1</name>
<reference key="1">
    <citation type="submission" date="2006-05" db="EMBL/GenBank/DDBJ databases">
        <title>Complete sequence of chromosome 1 of Burkholderia cenocepacia AU 1054.</title>
        <authorList>
            <consortium name="US DOE Joint Genome Institute"/>
            <person name="Copeland A."/>
            <person name="Lucas S."/>
            <person name="Lapidus A."/>
            <person name="Barry K."/>
            <person name="Detter J.C."/>
            <person name="Glavina del Rio T."/>
            <person name="Hammon N."/>
            <person name="Israni S."/>
            <person name="Dalin E."/>
            <person name="Tice H."/>
            <person name="Pitluck S."/>
            <person name="Chain P."/>
            <person name="Malfatti S."/>
            <person name="Shin M."/>
            <person name="Vergez L."/>
            <person name="Schmutz J."/>
            <person name="Larimer F."/>
            <person name="Land M."/>
            <person name="Hauser L."/>
            <person name="Kyrpides N."/>
            <person name="Lykidis A."/>
            <person name="LiPuma J.J."/>
            <person name="Konstantinidis K."/>
            <person name="Tiedje J.M."/>
            <person name="Richardson P."/>
        </authorList>
    </citation>
    <scope>NUCLEOTIDE SEQUENCE [LARGE SCALE GENOMIC DNA]</scope>
    <source>
        <strain>AU 1054</strain>
    </source>
</reference>
<keyword id="KW-0687">Ribonucleoprotein</keyword>
<keyword id="KW-0689">Ribosomal protein</keyword>
<proteinExistence type="inferred from homology"/>
<comment type="similarity">
    <text evidence="1">Belongs to the bacterial ribosomal protein bL36 family.</text>
</comment>
<protein>
    <recommendedName>
        <fullName evidence="1">Large ribosomal subunit protein bL36</fullName>
    </recommendedName>
    <alternativeName>
        <fullName evidence="2">50S ribosomal protein L36</fullName>
    </alternativeName>
</protein>
<accession>Q1BRX0</accession>
<feature type="chain" id="PRO_0000302169" description="Large ribosomal subunit protein bL36">
    <location>
        <begin position="1"/>
        <end position="38"/>
    </location>
</feature>
<sequence length="38" mass="4410">MKVMASVKRICRNCKIIKRKGVVRVICSSDPRHKQRQG</sequence>
<evidence type="ECO:0000255" key="1">
    <source>
        <dbReference type="HAMAP-Rule" id="MF_00251"/>
    </source>
</evidence>
<evidence type="ECO:0000305" key="2"/>
<gene>
    <name evidence="1" type="primary">rpmJ</name>
    <name type="ordered locus">Bcen_2737</name>
</gene>
<organism>
    <name type="scientific">Burkholderia orbicola (strain AU 1054)</name>
    <dbReference type="NCBI Taxonomy" id="331271"/>
    <lineage>
        <taxon>Bacteria</taxon>
        <taxon>Pseudomonadati</taxon>
        <taxon>Pseudomonadota</taxon>
        <taxon>Betaproteobacteria</taxon>
        <taxon>Burkholderiales</taxon>
        <taxon>Burkholderiaceae</taxon>
        <taxon>Burkholderia</taxon>
        <taxon>Burkholderia cepacia complex</taxon>
        <taxon>Burkholderia orbicola</taxon>
    </lineage>
</organism>